<name>TPS1_DICPU</name>
<dbReference type="EC" id="4.2.3.160" evidence="4"/>
<dbReference type="EMBL" id="MG262462">
    <property type="protein sequence ID" value="AXN72970.1"/>
    <property type="molecule type" value="mRNA"/>
</dbReference>
<dbReference type="EMBL" id="GL871072">
    <property type="protein sequence ID" value="EGC35090.1"/>
    <property type="molecule type" value="Genomic_DNA"/>
</dbReference>
<dbReference type="RefSeq" id="XP_003288397.1">
    <property type="nucleotide sequence ID" value="XM_003288349.1"/>
</dbReference>
<dbReference type="SMR" id="F0ZLU4"/>
<dbReference type="EnsemblProtists" id="EGC35090">
    <property type="protein sequence ID" value="EGC35090"/>
    <property type="gene ID" value="DICPUDRAFT_152610"/>
</dbReference>
<dbReference type="GeneID" id="10501800"/>
<dbReference type="KEGG" id="dpp:DICPUDRAFT_152610"/>
<dbReference type="VEuPathDB" id="AmoebaDB:DICPUDRAFT_152610"/>
<dbReference type="eggNOG" id="ENOG502SDMI">
    <property type="taxonomic scope" value="Eukaryota"/>
</dbReference>
<dbReference type="InParanoid" id="F0ZLU4"/>
<dbReference type="OMA" id="WSMQTPR"/>
<dbReference type="OrthoDB" id="6486656at2759"/>
<dbReference type="Proteomes" id="UP000001064">
    <property type="component" value="Unassembled WGS sequence"/>
</dbReference>
<dbReference type="GO" id="GO:0061923">
    <property type="term" value="F:(2S,3R,6S,9S)-(-)-protoillud-7-ene synthase activity"/>
    <property type="evidence" value="ECO:0007669"/>
    <property type="project" value="EnsemblProtists"/>
</dbReference>
<dbReference type="GO" id="GO:0046872">
    <property type="term" value="F:metal ion binding"/>
    <property type="evidence" value="ECO:0007669"/>
    <property type="project" value="UniProtKB-KW"/>
</dbReference>
<dbReference type="GO" id="GO:0010333">
    <property type="term" value="F:terpene synthase activity"/>
    <property type="evidence" value="ECO:0000318"/>
    <property type="project" value="GO_Central"/>
</dbReference>
<dbReference type="GO" id="GO:0046246">
    <property type="term" value="P:terpene biosynthetic process"/>
    <property type="evidence" value="ECO:0007669"/>
    <property type="project" value="UniProtKB-ARBA"/>
</dbReference>
<dbReference type="FunFam" id="1.10.600.10:FF:000047">
    <property type="entry name" value="Terpene synthase"/>
    <property type="match status" value="1"/>
</dbReference>
<dbReference type="Gene3D" id="1.10.600.10">
    <property type="entry name" value="Farnesyl Diphosphate Synthase"/>
    <property type="match status" value="1"/>
</dbReference>
<dbReference type="InterPro" id="IPR008949">
    <property type="entry name" value="Isoprenoid_synthase_dom_sf"/>
</dbReference>
<dbReference type="InterPro" id="IPR034686">
    <property type="entry name" value="Terpene_cyclase-like_2"/>
</dbReference>
<dbReference type="PANTHER" id="PTHR35201">
    <property type="entry name" value="TERPENE SYNTHASE"/>
    <property type="match status" value="1"/>
</dbReference>
<dbReference type="PANTHER" id="PTHR35201:SF3">
    <property type="entry name" value="TERPENE SYNTHASE 2-RELATED"/>
    <property type="match status" value="1"/>
</dbReference>
<dbReference type="Pfam" id="PF19086">
    <property type="entry name" value="Terpene_syn_C_2"/>
    <property type="match status" value="1"/>
</dbReference>
<dbReference type="SUPFAM" id="SSF48576">
    <property type="entry name" value="Terpenoid synthases"/>
    <property type="match status" value="1"/>
</dbReference>
<reference key="1">
    <citation type="journal article" date="2018" name="Sci. Rep.">
        <title>Diversity and Functional Evolution of Terpene Synthases in Dictyostelid Social Amoebae.</title>
        <authorList>
            <person name="Chen X."/>
            <person name="Kollner T.G."/>
            <person name="Shaulsky G."/>
            <person name="Jia Q."/>
            <person name="Dickschat J.S."/>
            <person name="Gershenzon J."/>
            <person name="Chen F."/>
        </authorList>
    </citation>
    <scope>NUCLEOTIDE SEQUENCE [MRNA]</scope>
    <scope>FUNCTION</scope>
    <scope>CATALYTIC ACTIVITY</scope>
    <source>
        <strain>AX1</strain>
    </source>
</reference>
<reference key="2">
    <citation type="journal article" date="2011" name="Genome Biol.">
        <title>Comparative genomics of the social amoebae Dictyostelium discoideum and Dictyostelium purpureum.</title>
        <authorList>
            <consortium name="US DOE Joint Genome Institute (JGI-PGF)"/>
            <person name="Sucgang R."/>
            <person name="Kuo A."/>
            <person name="Tian X."/>
            <person name="Salerno W."/>
            <person name="Parikh A."/>
            <person name="Feasley C.L."/>
            <person name="Dalin E."/>
            <person name="Tu H."/>
            <person name="Huang E."/>
            <person name="Barry K."/>
            <person name="Lindquist E."/>
            <person name="Shapiro H."/>
            <person name="Bruce D."/>
            <person name="Schmutz J."/>
            <person name="Salamov A."/>
            <person name="Fey P."/>
            <person name="Gaudet P."/>
            <person name="Anjard C."/>
            <person name="Babu M.M."/>
            <person name="Basu S."/>
            <person name="Bushmanova Y."/>
            <person name="van der Wel H."/>
            <person name="Katoh-Kurasawa M."/>
            <person name="Dinh C."/>
            <person name="Coutinho P.M."/>
            <person name="Saito T."/>
            <person name="Elias M."/>
            <person name="Schaap P."/>
            <person name="Kay R.R."/>
            <person name="Henrissat B."/>
            <person name="Eichinger L."/>
            <person name="Rivero F."/>
            <person name="Putnam N.H."/>
            <person name="West C.M."/>
            <person name="Loomis W.F."/>
            <person name="Chisholm R.L."/>
            <person name="Shaulsky G."/>
            <person name="Strassmann J.E."/>
            <person name="Queller D.C."/>
            <person name="Kuspa A."/>
            <person name="Grigoriev I.V."/>
        </authorList>
    </citation>
    <scope>NUCLEOTIDE SEQUENCE [LARGE SCALE GENOMIC DNA]</scope>
    <source>
        <strain>QSDP1</strain>
    </source>
</reference>
<feature type="chain" id="PRO_0000457018" description="Terpene synthase 1">
    <location>
        <begin position="1"/>
        <end position="377"/>
    </location>
</feature>
<feature type="region of interest" description="Disordered" evidence="3">
    <location>
        <begin position="326"/>
        <end position="359"/>
    </location>
</feature>
<feature type="short sequence motif" description="DDxx(x)D/E motif" evidence="1">
    <location>
        <begin position="81"/>
        <end position="86"/>
    </location>
</feature>
<feature type="short sequence motif" description="NDxxSxxxD/E motif" evidence="1">
    <location>
        <begin position="221"/>
        <end position="229"/>
    </location>
</feature>
<feature type="compositionally biased region" description="Low complexity" evidence="3">
    <location>
        <begin position="335"/>
        <end position="356"/>
    </location>
</feature>
<comment type="function">
    <text evidence="4">Terpene synthase that converts its substrate farnesyl diphosphate (FPP) into the sesquiterpene protoillud-7-ene.</text>
</comment>
<comment type="catalytic activity">
    <reaction evidence="4">
        <text>(2E,6E)-farnesyl diphosphate = (2S,3R,6S,9S)-(-)-protoillud-7-ene + diphosphate</text>
        <dbReference type="Rhea" id="RHEA:53628"/>
        <dbReference type="ChEBI" id="CHEBI:33019"/>
        <dbReference type="ChEBI" id="CHEBI:137530"/>
        <dbReference type="ChEBI" id="CHEBI:175763"/>
        <dbReference type="EC" id="4.2.3.160"/>
    </reaction>
    <physiologicalReaction direction="left-to-right" evidence="4">
        <dbReference type="Rhea" id="RHEA:53629"/>
    </physiologicalReaction>
</comment>
<comment type="domain">
    <text evidence="2">Contains several highly conserved motifs that are important for catalytic activity including the aspartate-rich 'DDxx(x)D/E' motif and the 'NDxxSxxxD/E' motif, both of which are involved in complexing metal ions to coordinate the binding of the isoprenyl diphosphate substrate in the active site.</text>
</comment>
<comment type="similarity">
    <text evidence="6">Belongs to the terpene synthase family.</text>
</comment>
<organism>
    <name type="scientific">Dictyostelium purpureum</name>
    <name type="common">Slime mold</name>
    <dbReference type="NCBI Taxonomy" id="5786"/>
    <lineage>
        <taxon>Eukaryota</taxon>
        <taxon>Amoebozoa</taxon>
        <taxon>Evosea</taxon>
        <taxon>Eumycetozoa</taxon>
        <taxon>Dictyostelia</taxon>
        <taxon>Dictyosteliales</taxon>
        <taxon>Dictyosteliaceae</taxon>
        <taxon>Dictyostelium</taxon>
    </lineage>
</organism>
<protein>
    <recommendedName>
        <fullName evidence="5">Terpene synthase 1</fullName>
        <ecNumber evidence="4">4.2.3.160</ecNumber>
    </recommendedName>
</protein>
<accession>F0ZLU4</accession>
<gene>
    <name evidence="5" type="primary">TPS1</name>
    <name type="ORF">DICPUDRAFT_152610</name>
</gene>
<proteinExistence type="evidence at protein level"/>
<evidence type="ECO:0000250" key="1">
    <source>
        <dbReference type="UniProtKB" id="Q54BE5"/>
    </source>
</evidence>
<evidence type="ECO:0000250" key="2">
    <source>
        <dbReference type="UniProtKB" id="Q55E23"/>
    </source>
</evidence>
<evidence type="ECO:0000256" key="3">
    <source>
        <dbReference type="SAM" id="MobiDB-lite"/>
    </source>
</evidence>
<evidence type="ECO:0000269" key="4">
    <source>
    </source>
</evidence>
<evidence type="ECO:0000303" key="5">
    <source>
    </source>
</evidence>
<evidence type="ECO:0000305" key="6"/>
<sequence length="377" mass="43790">MSLSLSDIKFPESWELIPNERNYIDYVYKESVELGVWRPDNKRDLIAHNNVVSLSKFFWPNMDFERLVMGGELMVWFFTFDDALDAGIYNDEQQAQVVKRMSDVFMNGTVEDDASGPEKMALHLRNKCEVMCGERKDTFNRFISSCIQWVDSIIPFNKIKIDGASPDIELYSYLRKINIGAFPCVTLTEVMLDHEIDHYVWYDPRWIKMNEDIAIITTLINDLVSYEKEVNDNAGDLNPLFFIQKQRKVPLTESFKEVVGLINHWVKDFTNLEESFMKSHKFKNSKQKRDFECMLEHLHYLASGSKLWSMQTPRYCSPTSPFIEMRKQSSSPNLTNSISIPTNNTNNSNNITSSPNKKQKIDITSSSAIFTTREIIN</sequence>
<keyword id="KW-0456">Lyase</keyword>
<keyword id="KW-0479">Metal-binding</keyword>
<keyword id="KW-1185">Reference proteome</keyword>